<keyword id="KW-0227">DNA damage</keyword>
<keyword id="KW-0233">DNA recombination</keyword>
<keyword id="KW-0234">DNA repair</keyword>
<keyword id="KW-1185">Reference proteome</keyword>
<proteinExistence type="inferred from homology"/>
<accession>Q3B1A2</accession>
<name>RECO_CHLL3</name>
<reference key="1">
    <citation type="submission" date="2005-08" db="EMBL/GenBank/DDBJ databases">
        <title>Complete sequence of Pelodictyon luteolum DSM 273.</title>
        <authorList>
            <consortium name="US DOE Joint Genome Institute"/>
            <person name="Copeland A."/>
            <person name="Lucas S."/>
            <person name="Lapidus A."/>
            <person name="Barry K."/>
            <person name="Detter J.C."/>
            <person name="Glavina T."/>
            <person name="Hammon N."/>
            <person name="Israni S."/>
            <person name="Pitluck S."/>
            <person name="Bryant D."/>
            <person name="Schmutz J."/>
            <person name="Larimer F."/>
            <person name="Land M."/>
            <person name="Kyrpides N."/>
            <person name="Ivanova N."/>
            <person name="Richardson P."/>
        </authorList>
    </citation>
    <scope>NUCLEOTIDE SEQUENCE [LARGE SCALE GENOMIC DNA]</scope>
    <source>
        <strain>DSM 273 / BCRC 81028 / 2530</strain>
    </source>
</reference>
<dbReference type="EMBL" id="CP000096">
    <property type="protein sequence ID" value="ABB24879.1"/>
    <property type="molecule type" value="Genomic_DNA"/>
</dbReference>
<dbReference type="RefSeq" id="WP_011358749.1">
    <property type="nucleotide sequence ID" value="NC_007512.1"/>
</dbReference>
<dbReference type="SMR" id="Q3B1A2"/>
<dbReference type="STRING" id="319225.Plut_2037"/>
<dbReference type="KEGG" id="plt:Plut_2037"/>
<dbReference type="eggNOG" id="COG1381">
    <property type="taxonomic scope" value="Bacteria"/>
</dbReference>
<dbReference type="HOGENOM" id="CLU_066632_1_0_10"/>
<dbReference type="OrthoDB" id="9789152at2"/>
<dbReference type="Proteomes" id="UP000002709">
    <property type="component" value="Chromosome"/>
</dbReference>
<dbReference type="GO" id="GO:0043590">
    <property type="term" value="C:bacterial nucleoid"/>
    <property type="evidence" value="ECO:0007669"/>
    <property type="project" value="TreeGrafter"/>
</dbReference>
<dbReference type="GO" id="GO:0006310">
    <property type="term" value="P:DNA recombination"/>
    <property type="evidence" value="ECO:0007669"/>
    <property type="project" value="UniProtKB-UniRule"/>
</dbReference>
<dbReference type="GO" id="GO:0006302">
    <property type="term" value="P:double-strand break repair"/>
    <property type="evidence" value="ECO:0007669"/>
    <property type="project" value="TreeGrafter"/>
</dbReference>
<dbReference type="Gene3D" id="2.40.50.140">
    <property type="entry name" value="Nucleic acid-binding proteins"/>
    <property type="match status" value="1"/>
</dbReference>
<dbReference type="Gene3D" id="1.20.1440.120">
    <property type="entry name" value="Recombination protein O, C-terminal domain"/>
    <property type="match status" value="1"/>
</dbReference>
<dbReference type="HAMAP" id="MF_00201">
    <property type="entry name" value="RecO"/>
    <property type="match status" value="1"/>
</dbReference>
<dbReference type="InterPro" id="IPR037278">
    <property type="entry name" value="ARFGAP/RecO"/>
</dbReference>
<dbReference type="InterPro" id="IPR022572">
    <property type="entry name" value="DNA_rep/recomb_RecO_N"/>
</dbReference>
<dbReference type="InterPro" id="IPR012340">
    <property type="entry name" value="NA-bd_OB-fold"/>
</dbReference>
<dbReference type="InterPro" id="IPR003717">
    <property type="entry name" value="RecO"/>
</dbReference>
<dbReference type="InterPro" id="IPR042242">
    <property type="entry name" value="RecO_C"/>
</dbReference>
<dbReference type="NCBIfam" id="TIGR00613">
    <property type="entry name" value="reco"/>
    <property type="match status" value="1"/>
</dbReference>
<dbReference type="PANTHER" id="PTHR33991">
    <property type="entry name" value="DNA REPAIR PROTEIN RECO"/>
    <property type="match status" value="1"/>
</dbReference>
<dbReference type="PANTHER" id="PTHR33991:SF1">
    <property type="entry name" value="DNA REPAIR PROTEIN RECO"/>
    <property type="match status" value="1"/>
</dbReference>
<dbReference type="Pfam" id="PF02565">
    <property type="entry name" value="RecO_C"/>
    <property type="match status" value="1"/>
</dbReference>
<dbReference type="Pfam" id="PF11967">
    <property type="entry name" value="RecO_N"/>
    <property type="match status" value="1"/>
</dbReference>
<dbReference type="SUPFAM" id="SSF57863">
    <property type="entry name" value="ArfGap/RecO-like zinc finger"/>
    <property type="match status" value="1"/>
</dbReference>
<dbReference type="SUPFAM" id="SSF50249">
    <property type="entry name" value="Nucleic acid-binding proteins"/>
    <property type="match status" value="1"/>
</dbReference>
<protein>
    <recommendedName>
        <fullName evidence="1">DNA repair protein RecO</fullName>
    </recommendedName>
    <alternativeName>
        <fullName evidence="1">Recombination protein O</fullName>
    </alternativeName>
</protein>
<gene>
    <name evidence="1" type="primary">recO</name>
    <name type="ordered locus">Plut_2037</name>
</gene>
<sequence length="264" mass="28928">MIVKTRAVVLREIKYRDQSKILTLYTREFGRLACILKGGRNPKNRLSGIFSAGNVLDIVLYRKPEREVQLISDGSLVSCPMVPGPDIERFGVLYRIIDLVRLTTEHDGRSPRLFSLLESTLLELNRERVAYRTLYAWFLLRFISLQGFAPELCRCVFSGREIAADAAGGPRGELLFVMNPGGLALPGTACTDGRNVRPILPEAADLLAALSRTSTAESAAGGSGIPEGSAALFCGTLLQEYCRHHLEHTGGQKNLAVISQLLAE</sequence>
<evidence type="ECO:0000255" key="1">
    <source>
        <dbReference type="HAMAP-Rule" id="MF_00201"/>
    </source>
</evidence>
<feature type="chain" id="PRO_1000193405" description="DNA repair protein RecO">
    <location>
        <begin position="1"/>
        <end position="264"/>
    </location>
</feature>
<comment type="function">
    <text evidence="1">Involved in DNA repair and RecF pathway recombination.</text>
</comment>
<comment type="similarity">
    <text evidence="1">Belongs to the RecO family.</text>
</comment>
<organism>
    <name type="scientific">Chlorobium luteolum (strain DSM 273 / BCRC 81028 / 2530)</name>
    <name type="common">Pelodictyon luteolum</name>
    <dbReference type="NCBI Taxonomy" id="319225"/>
    <lineage>
        <taxon>Bacteria</taxon>
        <taxon>Pseudomonadati</taxon>
        <taxon>Chlorobiota</taxon>
        <taxon>Chlorobiia</taxon>
        <taxon>Chlorobiales</taxon>
        <taxon>Chlorobiaceae</taxon>
        <taxon>Chlorobium/Pelodictyon group</taxon>
        <taxon>Pelodictyon</taxon>
    </lineage>
</organism>